<accession>Q8R9K8</accession>
<sequence>MSSKVIDKIMSFLGIEEEEEEIQTPQPVVSYDRRPKVVNIHTNPQIKVLISKPEKFEQVLSICNELKSKKPVIVDLQKMDKSEAQRVVDFLSGAVYALNGEITKISGYIFLVAPENFDVTGDIKEEVNALYNLN</sequence>
<dbReference type="EMBL" id="AE008691">
    <property type="protein sequence ID" value="AAM24803.1"/>
    <property type="molecule type" value="Genomic_DNA"/>
</dbReference>
<dbReference type="RefSeq" id="WP_011025834.1">
    <property type="nucleotide sequence ID" value="NC_003869.1"/>
</dbReference>
<dbReference type="SMR" id="Q8R9K8"/>
<dbReference type="STRING" id="273068.TTE1599"/>
<dbReference type="KEGG" id="tte:TTE1599"/>
<dbReference type="eggNOG" id="COG1799">
    <property type="taxonomic scope" value="Bacteria"/>
</dbReference>
<dbReference type="HOGENOM" id="CLU_078499_4_0_9"/>
<dbReference type="OrthoDB" id="9815206at2"/>
<dbReference type="Proteomes" id="UP000000555">
    <property type="component" value="Chromosome"/>
</dbReference>
<dbReference type="GO" id="GO:0005737">
    <property type="term" value="C:cytoplasm"/>
    <property type="evidence" value="ECO:0007669"/>
    <property type="project" value="UniProtKB-SubCell"/>
</dbReference>
<dbReference type="GO" id="GO:0000917">
    <property type="term" value="P:division septum assembly"/>
    <property type="evidence" value="ECO:0007669"/>
    <property type="project" value="UniProtKB-KW"/>
</dbReference>
<dbReference type="GO" id="GO:0043093">
    <property type="term" value="P:FtsZ-dependent cytokinesis"/>
    <property type="evidence" value="ECO:0007669"/>
    <property type="project" value="UniProtKB-UniRule"/>
</dbReference>
<dbReference type="Gene3D" id="3.30.110.150">
    <property type="entry name" value="SepF-like protein"/>
    <property type="match status" value="1"/>
</dbReference>
<dbReference type="HAMAP" id="MF_01197">
    <property type="entry name" value="SepF"/>
    <property type="match status" value="1"/>
</dbReference>
<dbReference type="InterPro" id="IPR023052">
    <property type="entry name" value="Cell_div_SepF"/>
</dbReference>
<dbReference type="InterPro" id="IPR007561">
    <property type="entry name" value="Cell_div_SepF/SepF-rel"/>
</dbReference>
<dbReference type="InterPro" id="IPR038594">
    <property type="entry name" value="SepF-like_sf"/>
</dbReference>
<dbReference type="PANTHER" id="PTHR35798">
    <property type="entry name" value="CELL DIVISION PROTEIN SEPF"/>
    <property type="match status" value="1"/>
</dbReference>
<dbReference type="PANTHER" id="PTHR35798:SF1">
    <property type="entry name" value="CELL DIVISION PROTEIN SEPF"/>
    <property type="match status" value="1"/>
</dbReference>
<dbReference type="Pfam" id="PF04472">
    <property type="entry name" value="SepF"/>
    <property type="match status" value="1"/>
</dbReference>
<name>SEPF_CALS4</name>
<protein>
    <recommendedName>
        <fullName evidence="1">Cell division protein SepF</fullName>
    </recommendedName>
</protein>
<keyword id="KW-0131">Cell cycle</keyword>
<keyword id="KW-0132">Cell division</keyword>
<keyword id="KW-0963">Cytoplasm</keyword>
<keyword id="KW-1185">Reference proteome</keyword>
<keyword id="KW-0717">Septation</keyword>
<gene>
    <name evidence="1" type="primary">sepF</name>
    <name type="ordered locus">TTE1599</name>
</gene>
<organism>
    <name type="scientific">Caldanaerobacter subterraneus subsp. tengcongensis (strain DSM 15242 / JCM 11007 / NBRC 100824 / MB4)</name>
    <name type="common">Thermoanaerobacter tengcongensis</name>
    <dbReference type="NCBI Taxonomy" id="273068"/>
    <lineage>
        <taxon>Bacteria</taxon>
        <taxon>Bacillati</taxon>
        <taxon>Bacillota</taxon>
        <taxon>Clostridia</taxon>
        <taxon>Thermoanaerobacterales</taxon>
        <taxon>Thermoanaerobacteraceae</taxon>
        <taxon>Caldanaerobacter</taxon>
    </lineage>
</organism>
<comment type="function">
    <text evidence="1">Cell division protein that is part of the divisome complex and is recruited early to the Z-ring. Probably stimulates Z-ring formation, perhaps through the cross-linking of FtsZ protofilaments. Its function overlaps with FtsA.</text>
</comment>
<comment type="subunit">
    <text evidence="1">Homodimer. Interacts with FtsZ.</text>
</comment>
<comment type="subcellular location">
    <subcellularLocation>
        <location evidence="1">Cytoplasm</location>
    </subcellularLocation>
    <text evidence="1">Localizes to the division site, in a FtsZ-dependent manner.</text>
</comment>
<comment type="similarity">
    <text evidence="1">Belongs to the SepF family.</text>
</comment>
<proteinExistence type="inferred from homology"/>
<evidence type="ECO:0000255" key="1">
    <source>
        <dbReference type="HAMAP-Rule" id="MF_01197"/>
    </source>
</evidence>
<feature type="chain" id="PRO_0000334133" description="Cell division protein SepF">
    <location>
        <begin position="1"/>
        <end position="134"/>
    </location>
</feature>
<reference key="1">
    <citation type="journal article" date="2002" name="Genome Res.">
        <title>A complete sequence of the T. tengcongensis genome.</title>
        <authorList>
            <person name="Bao Q."/>
            <person name="Tian Y."/>
            <person name="Li W."/>
            <person name="Xu Z."/>
            <person name="Xuan Z."/>
            <person name="Hu S."/>
            <person name="Dong W."/>
            <person name="Yang J."/>
            <person name="Chen Y."/>
            <person name="Xue Y."/>
            <person name="Xu Y."/>
            <person name="Lai X."/>
            <person name="Huang L."/>
            <person name="Dong X."/>
            <person name="Ma Y."/>
            <person name="Ling L."/>
            <person name="Tan H."/>
            <person name="Chen R."/>
            <person name="Wang J."/>
            <person name="Yu J."/>
            <person name="Yang H."/>
        </authorList>
    </citation>
    <scope>NUCLEOTIDE SEQUENCE [LARGE SCALE GENOMIC DNA]</scope>
    <source>
        <strain>DSM 15242 / JCM 11007 / NBRC 100824 / MB4</strain>
    </source>
</reference>